<comment type="function">
    <text evidence="1">Involved in the import of serine and threonine into the cell, with the concomitant import of sodium (symport system).</text>
</comment>
<comment type="catalytic activity">
    <reaction evidence="1">
        <text>L-serine(in) + Na(+)(in) = L-serine(out) + Na(+)(out)</text>
        <dbReference type="Rhea" id="RHEA:29575"/>
        <dbReference type="ChEBI" id="CHEBI:29101"/>
        <dbReference type="ChEBI" id="CHEBI:33384"/>
    </reaction>
    <physiologicalReaction direction="right-to-left" evidence="1">
        <dbReference type="Rhea" id="RHEA:29577"/>
    </physiologicalReaction>
</comment>
<comment type="catalytic activity">
    <reaction evidence="1">
        <text>L-threonine(in) + Na(+)(in) = L-threonine(out) + Na(+)(out)</text>
        <dbReference type="Rhea" id="RHEA:69999"/>
        <dbReference type="ChEBI" id="CHEBI:29101"/>
        <dbReference type="ChEBI" id="CHEBI:57926"/>
    </reaction>
    <physiologicalReaction direction="right-to-left" evidence="1">
        <dbReference type="Rhea" id="RHEA:70001"/>
    </physiologicalReaction>
</comment>
<comment type="subcellular location">
    <subcellularLocation>
        <location evidence="1">Cell inner membrane</location>
        <topology evidence="1">Multi-pass membrane protein</topology>
    </subcellularLocation>
</comment>
<comment type="similarity">
    <text evidence="1">Belongs to the dicarboxylate/amino acid:cation symporter (DAACS) (TC 2.A.23) family.</text>
</comment>
<evidence type="ECO:0000255" key="1">
    <source>
        <dbReference type="HAMAP-Rule" id="MF_01582"/>
    </source>
</evidence>
<feature type="chain" id="PRO_0000318794" description="Serine/threonine transporter SstT">
    <location>
        <begin position="1"/>
        <end position="415"/>
    </location>
</feature>
<feature type="transmembrane region" description="Helical" evidence="1">
    <location>
        <begin position="23"/>
        <end position="43"/>
    </location>
</feature>
<feature type="transmembrane region" description="Helical" evidence="1">
    <location>
        <begin position="47"/>
        <end position="67"/>
    </location>
</feature>
<feature type="transmembrane region" description="Helical" evidence="1">
    <location>
        <begin position="85"/>
        <end position="105"/>
    </location>
</feature>
<feature type="transmembrane region" description="Helical" evidence="1">
    <location>
        <begin position="144"/>
        <end position="164"/>
    </location>
</feature>
<feature type="transmembrane region" description="Helical" evidence="1">
    <location>
        <begin position="181"/>
        <end position="201"/>
    </location>
</feature>
<feature type="transmembrane region" description="Helical" evidence="1">
    <location>
        <begin position="220"/>
        <end position="240"/>
    </location>
</feature>
<feature type="transmembrane region" description="Helical" evidence="1">
    <location>
        <begin position="303"/>
        <end position="323"/>
    </location>
</feature>
<feature type="transmembrane region" description="Helical" evidence="1">
    <location>
        <begin position="333"/>
        <end position="353"/>
    </location>
</feature>
<reference key="1">
    <citation type="journal article" date="2010" name="PLoS ONE">
        <title>Genome sequence of Cronobacter sakazakii BAA-894 and comparative genomic hybridization analysis with other Cronobacter species.</title>
        <authorList>
            <person name="Kucerova E."/>
            <person name="Clifton S.W."/>
            <person name="Xia X.Q."/>
            <person name="Long F."/>
            <person name="Porwollik S."/>
            <person name="Fulton L."/>
            <person name="Fronick C."/>
            <person name="Minx P."/>
            <person name="Kyung K."/>
            <person name="Warren W."/>
            <person name="Fulton R."/>
            <person name="Feng D."/>
            <person name="Wollam A."/>
            <person name="Shah N."/>
            <person name="Bhonagiri V."/>
            <person name="Nash W.E."/>
            <person name="Hallsworth-Pepin K."/>
            <person name="Wilson R.K."/>
            <person name="McClelland M."/>
            <person name="Forsythe S.J."/>
        </authorList>
    </citation>
    <scope>NUCLEOTIDE SEQUENCE [LARGE SCALE GENOMIC DNA]</scope>
    <source>
        <strain>ATCC BAA-894</strain>
    </source>
</reference>
<dbReference type="EMBL" id="CP000783">
    <property type="protein sequence ID" value="ABU78715.1"/>
    <property type="molecule type" value="Genomic_DNA"/>
</dbReference>
<dbReference type="RefSeq" id="WP_012125922.1">
    <property type="nucleotide sequence ID" value="NC_009778.1"/>
</dbReference>
<dbReference type="SMR" id="A7MIT0"/>
<dbReference type="KEGG" id="esa:ESA_03500"/>
<dbReference type="PATRIC" id="fig|290339.8.peg.3113"/>
<dbReference type="HOGENOM" id="CLU_044581_0_0_6"/>
<dbReference type="Proteomes" id="UP000000260">
    <property type="component" value="Chromosome"/>
</dbReference>
<dbReference type="GO" id="GO:0005886">
    <property type="term" value="C:plasma membrane"/>
    <property type="evidence" value="ECO:0007669"/>
    <property type="project" value="UniProtKB-SubCell"/>
</dbReference>
<dbReference type="GO" id="GO:0005295">
    <property type="term" value="F:neutral L-amino acid:sodium symporter activity"/>
    <property type="evidence" value="ECO:0007669"/>
    <property type="project" value="TreeGrafter"/>
</dbReference>
<dbReference type="GO" id="GO:0032329">
    <property type="term" value="P:serine transport"/>
    <property type="evidence" value="ECO:0007669"/>
    <property type="project" value="InterPro"/>
</dbReference>
<dbReference type="GO" id="GO:0015826">
    <property type="term" value="P:threonine transport"/>
    <property type="evidence" value="ECO:0007669"/>
    <property type="project" value="InterPro"/>
</dbReference>
<dbReference type="FunFam" id="1.10.3860.10:FF:000003">
    <property type="entry name" value="Serine/threonine transporter sstT"/>
    <property type="match status" value="1"/>
</dbReference>
<dbReference type="Gene3D" id="1.10.3860.10">
    <property type="entry name" value="Sodium:dicarboxylate symporter"/>
    <property type="match status" value="1"/>
</dbReference>
<dbReference type="HAMAP" id="MF_01582">
    <property type="entry name" value="Ser_Thr_transp_SstT"/>
    <property type="match status" value="1"/>
</dbReference>
<dbReference type="InterPro" id="IPR001991">
    <property type="entry name" value="Na-dicarboxylate_symporter"/>
</dbReference>
<dbReference type="InterPro" id="IPR036458">
    <property type="entry name" value="Na:dicarbo_symporter_sf"/>
</dbReference>
<dbReference type="InterPro" id="IPR023025">
    <property type="entry name" value="Ser_Thr_transp_SstT"/>
</dbReference>
<dbReference type="NCBIfam" id="NF010151">
    <property type="entry name" value="PRK13628.1"/>
    <property type="match status" value="1"/>
</dbReference>
<dbReference type="PANTHER" id="PTHR42865">
    <property type="entry name" value="PROTON/GLUTAMATE-ASPARTATE SYMPORTER"/>
    <property type="match status" value="1"/>
</dbReference>
<dbReference type="PANTHER" id="PTHR42865:SF8">
    <property type="entry name" value="SERINE_THREONINE TRANSPORTER SSTT"/>
    <property type="match status" value="1"/>
</dbReference>
<dbReference type="Pfam" id="PF00375">
    <property type="entry name" value="SDF"/>
    <property type="match status" value="1"/>
</dbReference>
<dbReference type="PRINTS" id="PR00173">
    <property type="entry name" value="EDTRNSPORT"/>
</dbReference>
<dbReference type="SUPFAM" id="SSF118215">
    <property type="entry name" value="Proton glutamate symport protein"/>
    <property type="match status" value="1"/>
</dbReference>
<accession>A7MIT0</accession>
<keyword id="KW-0029">Amino-acid transport</keyword>
<keyword id="KW-0997">Cell inner membrane</keyword>
<keyword id="KW-1003">Cell membrane</keyword>
<keyword id="KW-0472">Membrane</keyword>
<keyword id="KW-1185">Reference proteome</keyword>
<keyword id="KW-0769">Symport</keyword>
<keyword id="KW-0812">Transmembrane</keyword>
<keyword id="KW-1133">Transmembrane helix</keyword>
<keyword id="KW-0813">Transport</keyword>
<name>SSTT_CROS8</name>
<proteinExistence type="inferred from homology"/>
<sequence length="415" mass="43329">MTTQSQGGGLLHRLAQGSLVKQILVGLVLGILLAWLSKPAAIAVGLLGTLFVGALKAVAPVLVLMLVMASIANHKHGQKTNIRPILWLYLLGTFSAALTAVLFSFLFPSTLHLVAGATDITPPTGIVGVLRDLLLSMVANPIDALLKGNYIGILVWAVGLGFALRHGNDTTKNLVNDMSDAVTFMVKLVIRFAPIGIFGLVASTLATTGFDTLWGYAQLLMVLIGCMFLVALVINPLIVFAKIRRNPYPLVFACLRESGVTAFFTRSSAANIPVNMALCEKLNLDRDTYSVSIPLGATINMAGAAITITVLTLAAVHTLGIAVDVPTALLLSVVASLCACGASGVAGGSLLLIPLACNMFGIPNDIAMQVVAVGFIIGVLQDSCETALNSSTDVLFTAAACQAEDARLASHALRN</sequence>
<protein>
    <recommendedName>
        <fullName evidence="1">Serine/threonine transporter SstT</fullName>
    </recommendedName>
    <alternativeName>
        <fullName evidence="1">Na(+)/serine-threonine symporter</fullName>
    </alternativeName>
</protein>
<organism>
    <name type="scientific">Cronobacter sakazakii (strain ATCC BAA-894)</name>
    <name type="common">Enterobacter sakazakii</name>
    <dbReference type="NCBI Taxonomy" id="290339"/>
    <lineage>
        <taxon>Bacteria</taxon>
        <taxon>Pseudomonadati</taxon>
        <taxon>Pseudomonadota</taxon>
        <taxon>Gammaproteobacteria</taxon>
        <taxon>Enterobacterales</taxon>
        <taxon>Enterobacteriaceae</taxon>
        <taxon>Cronobacter</taxon>
    </lineage>
</organism>
<gene>
    <name evidence="1" type="primary">sstT</name>
    <name type="ordered locus">ESA_03500</name>
</gene>